<protein>
    <recommendedName>
        <fullName evidence="1">tRNA N6-adenosine threonylcarbamoyltransferase</fullName>
        <ecNumber evidence="1">2.3.1.234</ecNumber>
    </recommendedName>
    <alternativeName>
        <fullName evidence="1">N6-L-threonylcarbamoyladenine synthase</fullName>
        <shortName evidence="1">t(6)A synthase</shortName>
    </alternativeName>
    <alternativeName>
        <fullName evidence="1">t(6)A37 threonylcarbamoyladenosine biosynthesis protein TsaD</fullName>
    </alternativeName>
    <alternativeName>
        <fullName evidence="1">tRNA threonylcarbamoyladenosine biosynthesis protein TsaD</fullName>
    </alternativeName>
</protein>
<organism>
    <name type="scientific">Brucella abortus biovar 1 (strain 9-941)</name>
    <dbReference type="NCBI Taxonomy" id="262698"/>
    <lineage>
        <taxon>Bacteria</taxon>
        <taxon>Pseudomonadati</taxon>
        <taxon>Pseudomonadota</taxon>
        <taxon>Alphaproteobacteria</taxon>
        <taxon>Hyphomicrobiales</taxon>
        <taxon>Brucellaceae</taxon>
        <taxon>Brucella/Ochrobactrum group</taxon>
        <taxon>Brucella</taxon>
    </lineage>
</organism>
<reference key="1">
    <citation type="journal article" date="2005" name="J. Bacteriol.">
        <title>Completion of the genome sequence of Brucella abortus and comparison to the highly similar genomes of Brucella melitensis and Brucella suis.</title>
        <authorList>
            <person name="Halling S.M."/>
            <person name="Peterson-Burch B.D."/>
            <person name="Bricker B.J."/>
            <person name="Zuerner R.L."/>
            <person name="Qing Z."/>
            <person name="Li L.-L."/>
            <person name="Kapur V."/>
            <person name="Alt D.P."/>
            <person name="Olsen S.C."/>
        </authorList>
    </citation>
    <scope>NUCLEOTIDE SEQUENCE [LARGE SCALE GENOMIC DNA]</scope>
    <source>
        <strain>9-941</strain>
    </source>
</reference>
<evidence type="ECO:0000255" key="1">
    <source>
        <dbReference type="HAMAP-Rule" id="MF_01445"/>
    </source>
</evidence>
<evidence type="ECO:0000256" key="2">
    <source>
        <dbReference type="SAM" id="MobiDB-lite"/>
    </source>
</evidence>
<proteinExistence type="inferred from homology"/>
<sequence>MRVLGIETSCDETAAAIVERDDMGEGRILSNVVLSQIAEHEPYGGVVPEIAARAHVEALDRLVDRALNDAGLKLYEVDAVAATAGPGLIGGLIVGLMTAKALAMAAQKPFYAVNHLEGHALTARLTDGLPFPYLLLLVSGGHTQMVLVRGIGDYERLGTTIDDALGEAFDKTAKLLGLPYPGGPTVERMALQGDQKRFALPRPLKGEARLDFSFSGLKTAVRQTATELVPLTDQDVTDICASFQAAVADTLSDRVGRSLERFKTEFPDCATPSLVVAGGVAANKTLRAALENLCTRHGFAFIAPPLNLCTDNAAMIAWAGAERAATQAPDSLDIAPRSRWPLDEKSAPVFGTGRRGAKA</sequence>
<comment type="function">
    <text evidence="1">Required for the formation of a threonylcarbamoyl group on adenosine at position 37 (t(6)A37) in tRNAs that read codons beginning with adenine. Is involved in the transfer of the threonylcarbamoyl moiety of threonylcarbamoyl-AMP (TC-AMP) to the N6 group of A37, together with TsaE and TsaB. TsaD likely plays a direct catalytic role in this reaction.</text>
</comment>
<comment type="catalytic activity">
    <reaction evidence="1">
        <text>L-threonylcarbamoyladenylate + adenosine(37) in tRNA = N(6)-L-threonylcarbamoyladenosine(37) in tRNA + AMP + H(+)</text>
        <dbReference type="Rhea" id="RHEA:37059"/>
        <dbReference type="Rhea" id="RHEA-COMP:10162"/>
        <dbReference type="Rhea" id="RHEA-COMP:10163"/>
        <dbReference type="ChEBI" id="CHEBI:15378"/>
        <dbReference type="ChEBI" id="CHEBI:73682"/>
        <dbReference type="ChEBI" id="CHEBI:74411"/>
        <dbReference type="ChEBI" id="CHEBI:74418"/>
        <dbReference type="ChEBI" id="CHEBI:456215"/>
        <dbReference type="EC" id="2.3.1.234"/>
    </reaction>
</comment>
<comment type="cofactor">
    <cofactor evidence="1">
        <name>Fe(2+)</name>
        <dbReference type="ChEBI" id="CHEBI:29033"/>
    </cofactor>
    <text evidence="1">Binds 1 Fe(2+) ion per subunit.</text>
</comment>
<comment type="subcellular location">
    <subcellularLocation>
        <location evidence="1">Cytoplasm</location>
    </subcellularLocation>
</comment>
<comment type="similarity">
    <text evidence="1">Belongs to the KAE1 / TsaD family.</text>
</comment>
<keyword id="KW-0012">Acyltransferase</keyword>
<keyword id="KW-0963">Cytoplasm</keyword>
<keyword id="KW-0408">Iron</keyword>
<keyword id="KW-0479">Metal-binding</keyword>
<keyword id="KW-0808">Transferase</keyword>
<keyword id="KW-0819">tRNA processing</keyword>
<gene>
    <name evidence="1" type="primary">tsaD</name>
    <name type="synonym">gcp</name>
    <name type="ordered locus">BruAb1_1865</name>
</gene>
<name>TSAD_BRUAB</name>
<feature type="chain" id="PRO_0000303293" description="tRNA N6-adenosine threonylcarbamoyltransferase">
    <location>
        <begin position="1"/>
        <end position="359"/>
    </location>
</feature>
<feature type="region of interest" description="Disordered" evidence="2">
    <location>
        <begin position="328"/>
        <end position="359"/>
    </location>
</feature>
<feature type="binding site" evidence="1">
    <location>
        <position position="115"/>
    </location>
    <ligand>
        <name>Fe cation</name>
        <dbReference type="ChEBI" id="CHEBI:24875"/>
    </ligand>
</feature>
<feature type="binding site" evidence="1">
    <location>
        <position position="119"/>
    </location>
    <ligand>
        <name>Fe cation</name>
        <dbReference type="ChEBI" id="CHEBI:24875"/>
    </ligand>
</feature>
<feature type="binding site" evidence="1">
    <location>
        <begin position="137"/>
        <end position="141"/>
    </location>
    <ligand>
        <name>substrate</name>
    </ligand>
</feature>
<feature type="binding site" evidence="1">
    <location>
        <position position="170"/>
    </location>
    <ligand>
        <name>substrate</name>
    </ligand>
</feature>
<feature type="binding site" evidence="1">
    <location>
        <position position="183"/>
    </location>
    <ligand>
        <name>substrate</name>
    </ligand>
</feature>
<feature type="binding site" evidence="1">
    <location>
        <position position="283"/>
    </location>
    <ligand>
        <name>substrate</name>
    </ligand>
</feature>
<feature type="binding site" evidence="1">
    <location>
        <position position="311"/>
    </location>
    <ligand>
        <name>Fe cation</name>
        <dbReference type="ChEBI" id="CHEBI:24875"/>
    </ligand>
</feature>
<dbReference type="EC" id="2.3.1.234" evidence="1"/>
<dbReference type="EMBL" id="AE017223">
    <property type="protein sequence ID" value="AAX75177.1"/>
    <property type="molecule type" value="Genomic_DNA"/>
</dbReference>
<dbReference type="RefSeq" id="WP_002966988.1">
    <property type="nucleotide sequence ID" value="NC_006932.1"/>
</dbReference>
<dbReference type="SMR" id="Q57B07"/>
<dbReference type="EnsemblBacteria" id="AAX75177">
    <property type="protein sequence ID" value="AAX75177"/>
    <property type="gene ID" value="BruAb1_1865"/>
</dbReference>
<dbReference type="GeneID" id="93017779"/>
<dbReference type="KEGG" id="bmb:BruAb1_1865"/>
<dbReference type="HOGENOM" id="CLU_023208_0_2_5"/>
<dbReference type="Proteomes" id="UP000000540">
    <property type="component" value="Chromosome I"/>
</dbReference>
<dbReference type="GO" id="GO:0005737">
    <property type="term" value="C:cytoplasm"/>
    <property type="evidence" value="ECO:0007669"/>
    <property type="project" value="UniProtKB-SubCell"/>
</dbReference>
<dbReference type="GO" id="GO:0005506">
    <property type="term" value="F:iron ion binding"/>
    <property type="evidence" value="ECO:0007669"/>
    <property type="project" value="UniProtKB-UniRule"/>
</dbReference>
<dbReference type="GO" id="GO:0061711">
    <property type="term" value="F:N(6)-L-threonylcarbamoyladenine synthase activity"/>
    <property type="evidence" value="ECO:0007669"/>
    <property type="project" value="UniProtKB-EC"/>
</dbReference>
<dbReference type="GO" id="GO:0002949">
    <property type="term" value="P:tRNA threonylcarbamoyladenosine modification"/>
    <property type="evidence" value="ECO:0007669"/>
    <property type="project" value="UniProtKB-UniRule"/>
</dbReference>
<dbReference type="CDD" id="cd24133">
    <property type="entry name" value="ASKHA_NBD_TsaD_bac"/>
    <property type="match status" value="1"/>
</dbReference>
<dbReference type="FunFam" id="3.30.420.40:FF:000040">
    <property type="entry name" value="tRNA N6-adenosine threonylcarbamoyltransferase"/>
    <property type="match status" value="1"/>
</dbReference>
<dbReference type="Gene3D" id="3.30.420.40">
    <property type="match status" value="2"/>
</dbReference>
<dbReference type="HAMAP" id="MF_01445">
    <property type="entry name" value="TsaD"/>
    <property type="match status" value="1"/>
</dbReference>
<dbReference type="InterPro" id="IPR043129">
    <property type="entry name" value="ATPase_NBD"/>
</dbReference>
<dbReference type="InterPro" id="IPR000905">
    <property type="entry name" value="Gcp-like_dom"/>
</dbReference>
<dbReference type="InterPro" id="IPR017861">
    <property type="entry name" value="KAE1/TsaD"/>
</dbReference>
<dbReference type="InterPro" id="IPR022450">
    <property type="entry name" value="TsaD"/>
</dbReference>
<dbReference type="NCBIfam" id="TIGR00329">
    <property type="entry name" value="gcp_kae1"/>
    <property type="match status" value="1"/>
</dbReference>
<dbReference type="NCBIfam" id="TIGR03723">
    <property type="entry name" value="T6A_TsaD_YgjD"/>
    <property type="match status" value="1"/>
</dbReference>
<dbReference type="PANTHER" id="PTHR11735">
    <property type="entry name" value="TRNA N6-ADENOSINE THREONYLCARBAMOYLTRANSFERASE"/>
    <property type="match status" value="1"/>
</dbReference>
<dbReference type="PANTHER" id="PTHR11735:SF6">
    <property type="entry name" value="TRNA N6-ADENOSINE THREONYLCARBAMOYLTRANSFERASE, MITOCHONDRIAL"/>
    <property type="match status" value="1"/>
</dbReference>
<dbReference type="Pfam" id="PF00814">
    <property type="entry name" value="TsaD"/>
    <property type="match status" value="1"/>
</dbReference>
<dbReference type="PRINTS" id="PR00789">
    <property type="entry name" value="OSIALOPTASE"/>
</dbReference>
<dbReference type="SUPFAM" id="SSF53067">
    <property type="entry name" value="Actin-like ATPase domain"/>
    <property type="match status" value="2"/>
</dbReference>
<accession>Q57B07</accession>